<organism>
    <name type="scientific">Cucumis sativus</name>
    <name type="common">Cucumber</name>
    <dbReference type="NCBI Taxonomy" id="3659"/>
    <lineage>
        <taxon>Eukaryota</taxon>
        <taxon>Viridiplantae</taxon>
        <taxon>Streptophyta</taxon>
        <taxon>Embryophyta</taxon>
        <taxon>Tracheophyta</taxon>
        <taxon>Spermatophyta</taxon>
        <taxon>Magnoliopsida</taxon>
        <taxon>eudicotyledons</taxon>
        <taxon>Gunneridae</taxon>
        <taxon>Pentapetalae</taxon>
        <taxon>rosids</taxon>
        <taxon>fabids</taxon>
        <taxon>Cucurbitales</taxon>
        <taxon>Cucurbitaceae</taxon>
        <taxon>Benincaseae</taxon>
        <taxon>Cucumis</taxon>
    </lineage>
</organism>
<reference key="1">
    <citation type="journal article" date="2006" name="Plant Cell Rep.">
        <title>Complete sequence and organization of the cucumber (Cucumis sativus L. cv. Baekmibaekdadagi) chloroplast genome.</title>
        <authorList>
            <person name="Kim J.-S."/>
            <person name="Jung J.D."/>
            <person name="Lee J.-A."/>
            <person name="Park H.-W."/>
            <person name="Oh K.-H."/>
            <person name="Jeong W.J."/>
            <person name="Choi D.-W."/>
            <person name="Liu J.R."/>
            <person name="Cho K.Y."/>
        </authorList>
    </citation>
    <scope>NUCLEOTIDE SEQUENCE [LARGE SCALE GENOMIC DNA]</scope>
    <source>
        <strain>cv. Baekmibaekdadagi</strain>
    </source>
</reference>
<reference key="2">
    <citation type="journal article" date="2007" name="Cell. Mol. Biol. Lett.">
        <title>The complete structure of the cucumber (Cucumis sativus L.) chloroplast genome: its composition and comparative analysis.</title>
        <authorList>
            <person name="Plader W.W."/>
            <person name="Yukawa Y."/>
            <person name="Sugiura M."/>
            <person name="Malepszy S."/>
        </authorList>
    </citation>
    <scope>NUCLEOTIDE SEQUENCE [LARGE SCALE GENOMIC DNA]</scope>
    <source>
        <strain>cv. Borszczagowski</strain>
    </source>
</reference>
<reference key="3">
    <citation type="journal article" date="2007" name="Genome">
        <title>Sequencing cucumber (Cucumis sativus L.) chloroplast genomes identifies differences between chilling-tolerant and -susceptible cucumber lines.</title>
        <authorList>
            <person name="Chung S.-M."/>
            <person name="Gordon V.S."/>
            <person name="Staub J.E."/>
        </authorList>
    </citation>
    <scope>NUCLEOTIDE SEQUENCE [LARGE SCALE GENOMIC DNA]</scope>
    <source>
        <strain>cv. Chipper</strain>
        <strain>cv. Gy14</strain>
    </source>
</reference>
<comment type="function">
    <text evidence="1">Found at the monomer-monomer interface of the photosystem II (PS II) dimer, plays a role in assembly and dimerization of PSII. PSII is a light-driven water plastoquinone oxidoreductase, using light energy to abstract electrons from H(2)O, generating a proton gradient subsequently used for ATP formation.</text>
</comment>
<comment type="subunit">
    <text evidence="1">PSII is composed of 1 copy each of membrane proteins PsbA, PsbB, PsbC, PsbD, PsbE, PsbF, PsbH, PsbI, PsbJ, PsbK, PsbL, PsbM, PsbT, PsbY, PsbZ, Psb30/Ycf12, at least 3 peripheral proteins of the oxygen-evolving complex and a large number of cofactors. It forms dimeric complexes.</text>
</comment>
<comment type="subcellular location">
    <subcellularLocation>
        <location evidence="1">Plastid</location>
        <location evidence="1">Chloroplast thylakoid membrane</location>
        <topology evidence="1">Single-pass membrane protein</topology>
    </subcellularLocation>
</comment>
<comment type="similarity">
    <text evidence="1">Belongs to the PsbT family.</text>
</comment>
<comment type="sequence caution" evidence="2">
    <conflict type="erroneous initiation">
        <sequence resource="EMBL-CDS" id="ABI98772"/>
    </conflict>
    <text>Extended N-terminus.</text>
</comment>
<dbReference type="EMBL" id="DQ119058">
    <property type="protein sequence ID" value="AAZ94677.1"/>
    <property type="molecule type" value="Genomic_DNA"/>
</dbReference>
<dbReference type="EMBL" id="AJ970307">
    <property type="protein sequence ID" value="CAJ00786.1"/>
    <property type="molecule type" value="Genomic_DNA"/>
</dbReference>
<dbReference type="EMBL" id="DQ865975">
    <property type="protein sequence ID" value="ABI97443.1"/>
    <property type="molecule type" value="Genomic_DNA"/>
</dbReference>
<dbReference type="EMBL" id="DQ865976">
    <property type="protein sequence ID" value="ABI98772.1"/>
    <property type="status" value="ALT_INIT"/>
    <property type="molecule type" value="Genomic_DNA"/>
</dbReference>
<dbReference type="RefSeq" id="YP_247627.1">
    <property type="nucleotide sequence ID" value="NC_007144.1"/>
</dbReference>
<dbReference type="SMR" id="Q4VZI7"/>
<dbReference type="GeneID" id="3429288"/>
<dbReference type="KEGG" id="csv:3429288"/>
<dbReference type="GO" id="GO:0009535">
    <property type="term" value="C:chloroplast thylakoid membrane"/>
    <property type="evidence" value="ECO:0007669"/>
    <property type="project" value="UniProtKB-SubCell"/>
</dbReference>
<dbReference type="GO" id="GO:0009539">
    <property type="term" value="C:photosystem II reaction center"/>
    <property type="evidence" value="ECO:0007669"/>
    <property type="project" value="InterPro"/>
</dbReference>
<dbReference type="GO" id="GO:0015979">
    <property type="term" value="P:photosynthesis"/>
    <property type="evidence" value="ECO:0007669"/>
    <property type="project" value="UniProtKB-UniRule"/>
</dbReference>
<dbReference type="HAMAP" id="MF_00808">
    <property type="entry name" value="PSII_PsbT"/>
    <property type="match status" value="1"/>
</dbReference>
<dbReference type="InterPro" id="IPR001743">
    <property type="entry name" value="PSII_PsbT"/>
</dbReference>
<dbReference type="InterPro" id="IPR037268">
    <property type="entry name" value="PSII_PsbT_sf"/>
</dbReference>
<dbReference type="PANTHER" id="PTHR36411">
    <property type="match status" value="1"/>
</dbReference>
<dbReference type="PANTHER" id="PTHR36411:SF2">
    <property type="entry name" value="PHOTOSYSTEM II REACTION CENTER PROTEIN T"/>
    <property type="match status" value="1"/>
</dbReference>
<dbReference type="Pfam" id="PF01405">
    <property type="entry name" value="PsbT"/>
    <property type="match status" value="1"/>
</dbReference>
<dbReference type="SUPFAM" id="SSF161029">
    <property type="entry name" value="Photosystem II reaction center protein T, PsbT"/>
    <property type="match status" value="1"/>
</dbReference>
<keyword id="KW-0150">Chloroplast</keyword>
<keyword id="KW-0472">Membrane</keyword>
<keyword id="KW-0602">Photosynthesis</keyword>
<keyword id="KW-0604">Photosystem II</keyword>
<keyword id="KW-0934">Plastid</keyword>
<keyword id="KW-0793">Thylakoid</keyword>
<keyword id="KW-0812">Transmembrane</keyword>
<keyword id="KW-1133">Transmembrane helix</keyword>
<proteinExistence type="inferred from homology"/>
<evidence type="ECO:0000255" key="1">
    <source>
        <dbReference type="HAMAP-Rule" id="MF_00808"/>
    </source>
</evidence>
<evidence type="ECO:0000305" key="2"/>
<accession>Q4VZI7</accession>
<accession>A5J1W1</accession>
<accession>A5J244</accession>
<gene>
    <name evidence="1" type="primary">psbT</name>
    <name type="ordered locus">CsCp069</name>
</gene>
<sequence length="37" mass="4213">MEALVYTFLLVSTLGIIFFAIFFREPPKVPVPTKKAK</sequence>
<name>PSBT_CUCSA</name>
<feature type="chain" id="PRO_0000276291" description="Photosystem II reaction center protein T">
    <location>
        <begin position="1"/>
        <end position="37"/>
    </location>
</feature>
<feature type="transmembrane region" description="Helical" evidence="1">
    <location>
        <begin position="3"/>
        <end position="23"/>
    </location>
</feature>
<geneLocation type="chloroplast"/>
<protein>
    <recommendedName>
        <fullName evidence="1">Photosystem II reaction center protein T</fullName>
        <shortName evidence="1">PSII-T</shortName>
    </recommendedName>
</protein>